<comment type="function">
    <text evidence="1">Could be a mediator in iron transactions between iron acquisition and iron-requiring processes, such as synthesis and/or repair of Fe-S clusters in biosynthetic enzymes.</text>
</comment>
<comment type="similarity">
    <text evidence="1">Belongs to the Fe(2+)-trafficking protein family.</text>
</comment>
<sequence length="91" mass="10368">MARMIQCAKLGKEAEGLDFPPLPGELGKRIYENVSKEAWQGWLKQQTMLINENRLNMADPRARQYLMKQTEKYFFGEGADQASGYVPPTEG</sequence>
<reference key="1">
    <citation type="submission" date="2007-10" db="EMBL/GenBank/DDBJ databases">
        <title>Complete sequence of chromosome 1 of Burkholderia multivorans ATCC 17616.</title>
        <authorList>
            <person name="Copeland A."/>
            <person name="Lucas S."/>
            <person name="Lapidus A."/>
            <person name="Barry K."/>
            <person name="Glavina del Rio T."/>
            <person name="Dalin E."/>
            <person name="Tice H."/>
            <person name="Pitluck S."/>
            <person name="Chain P."/>
            <person name="Malfatti S."/>
            <person name="Shin M."/>
            <person name="Vergez L."/>
            <person name="Schmutz J."/>
            <person name="Larimer F."/>
            <person name="Land M."/>
            <person name="Hauser L."/>
            <person name="Kyrpides N."/>
            <person name="Kim E."/>
            <person name="Tiedje J."/>
            <person name="Richardson P."/>
        </authorList>
    </citation>
    <scope>NUCLEOTIDE SEQUENCE [LARGE SCALE GENOMIC DNA]</scope>
    <source>
        <strain>ATCC 17616 / 249</strain>
    </source>
</reference>
<reference key="2">
    <citation type="submission" date="2007-04" db="EMBL/GenBank/DDBJ databases">
        <title>Complete genome sequence of Burkholderia multivorans ATCC 17616.</title>
        <authorList>
            <person name="Ohtsubo Y."/>
            <person name="Yamashita A."/>
            <person name="Kurokawa K."/>
            <person name="Takami H."/>
            <person name="Yuhara S."/>
            <person name="Nishiyama E."/>
            <person name="Endo R."/>
            <person name="Miyazaki R."/>
            <person name="Ono A."/>
            <person name="Yano K."/>
            <person name="Ito M."/>
            <person name="Sota M."/>
            <person name="Yuji N."/>
            <person name="Hattori M."/>
            <person name="Tsuda M."/>
        </authorList>
    </citation>
    <scope>NUCLEOTIDE SEQUENCE [LARGE SCALE GENOMIC DNA]</scope>
    <source>
        <strain>ATCC 17616 / 249</strain>
    </source>
</reference>
<evidence type="ECO:0000255" key="1">
    <source>
        <dbReference type="HAMAP-Rule" id="MF_00686"/>
    </source>
</evidence>
<name>FETP_BURM1</name>
<organism>
    <name type="scientific">Burkholderia multivorans (strain ATCC 17616 / 249)</name>
    <dbReference type="NCBI Taxonomy" id="395019"/>
    <lineage>
        <taxon>Bacteria</taxon>
        <taxon>Pseudomonadati</taxon>
        <taxon>Pseudomonadota</taxon>
        <taxon>Betaproteobacteria</taxon>
        <taxon>Burkholderiales</taxon>
        <taxon>Burkholderiaceae</taxon>
        <taxon>Burkholderia</taxon>
        <taxon>Burkholderia cepacia complex</taxon>
    </lineage>
</organism>
<proteinExistence type="inferred from homology"/>
<protein>
    <recommendedName>
        <fullName evidence="1">Probable Fe(2+)-trafficking protein</fullName>
    </recommendedName>
</protein>
<gene>
    <name type="ordered locus">Bmul_1114</name>
    <name type="ordered locus">BMULJ_02141</name>
</gene>
<dbReference type="EMBL" id="CP000868">
    <property type="protein sequence ID" value="ABX14804.1"/>
    <property type="molecule type" value="Genomic_DNA"/>
</dbReference>
<dbReference type="EMBL" id="AP009385">
    <property type="protein sequence ID" value="BAG44047.1"/>
    <property type="molecule type" value="Genomic_DNA"/>
</dbReference>
<dbReference type="RefSeq" id="WP_006401987.1">
    <property type="nucleotide sequence ID" value="NC_010804.1"/>
</dbReference>
<dbReference type="SMR" id="A9AGR3"/>
<dbReference type="STRING" id="395019.BMULJ_02141"/>
<dbReference type="KEGG" id="bmj:BMULJ_02141"/>
<dbReference type="KEGG" id="bmu:Bmul_1114"/>
<dbReference type="eggNOG" id="COG2924">
    <property type="taxonomic scope" value="Bacteria"/>
</dbReference>
<dbReference type="HOGENOM" id="CLU_170994_0_0_4"/>
<dbReference type="Proteomes" id="UP000008815">
    <property type="component" value="Chromosome 1"/>
</dbReference>
<dbReference type="GO" id="GO:0005829">
    <property type="term" value="C:cytosol"/>
    <property type="evidence" value="ECO:0007669"/>
    <property type="project" value="TreeGrafter"/>
</dbReference>
<dbReference type="GO" id="GO:0005506">
    <property type="term" value="F:iron ion binding"/>
    <property type="evidence" value="ECO:0007669"/>
    <property type="project" value="UniProtKB-UniRule"/>
</dbReference>
<dbReference type="GO" id="GO:0034599">
    <property type="term" value="P:cellular response to oxidative stress"/>
    <property type="evidence" value="ECO:0007669"/>
    <property type="project" value="TreeGrafter"/>
</dbReference>
<dbReference type="FunFam" id="1.10.3880.10:FF:000001">
    <property type="entry name" value="Probable Fe(2+)-trafficking protein"/>
    <property type="match status" value="1"/>
</dbReference>
<dbReference type="Gene3D" id="1.10.3880.10">
    <property type="entry name" value="Fe(II) trafficking protein YggX"/>
    <property type="match status" value="1"/>
</dbReference>
<dbReference type="HAMAP" id="MF_00686">
    <property type="entry name" value="Fe_traffic_YggX"/>
    <property type="match status" value="1"/>
</dbReference>
<dbReference type="InterPro" id="IPR007457">
    <property type="entry name" value="Fe_traffick_prot_YggX"/>
</dbReference>
<dbReference type="InterPro" id="IPR036766">
    <property type="entry name" value="Fe_traffick_prot_YggX_sf"/>
</dbReference>
<dbReference type="NCBIfam" id="NF003817">
    <property type="entry name" value="PRK05408.1"/>
    <property type="match status" value="1"/>
</dbReference>
<dbReference type="PANTHER" id="PTHR36965">
    <property type="entry name" value="FE(2+)-TRAFFICKING PROTEIN-RELATED"/>
    <property type="match status" value="1"/>
</dbReference>
<dbReference type="PANTHER" id="PTHR36965:SF1">
    <property type="entry name" value="FE(2+)-TRAFFICKING PROTEIN-RELATED"/>
    <property type="match status" value="1"/>
</dbReference>
<dbReference type="Pfam" id="PF04362">
    <property type="entry name" value="Iron_traffic"/>
    <property type="match status" value="1"/>
</dbReference>
<dbReference type="PIRSF" id="PIRSF029827">
    <property type="entry name" value="Fe_traffic_YggX"/>
    <property type="match status" value="1"/>
</dbReference>
<dbReference type="SUPFAM" id="SSF111148">
    <property type="entry name" value="YggX-like"/>
    <property type="match status" value="1"/>
</dbReference>
<keyword id="KW-0408">Iron</keyword>
<keyword id="KW-1185">Reference proteome</keyword>
<feature type="chain" id="PRO_1000131831" description="Probable Fe(2+)-trafficking protein">
    <location>
        <begin position="1"/>
        <end position="91"/>
    </location>
</feature>
<accession>A9AGR3</accession>